<comment type="function">
    <text evidence="8">Scaffold protein that plays an important role in mediating the activation of NF-kappa-B via BCL10 or EGFR.</text>
</comment>
<comment type="subunit">
    <text evidence="2 8">CARD10 and BCL10 bind to each other by CARD-CARD interaction. They both participate in a complex with MALT1, where MALT1 binds to BCL10 (By similarity). Interacts with TMEM43; this interaction is essential for EGFR-mediated NF-kappa-B activation (PubMed:27991920).</text>
</comment>
<comment type="interaction">
    <interactant intactId="EBI-3866279">
        <id>Q9BWT7</id>
    </interactant>
    <interactant intactId="EBI-742750">
        <id>Q8TBE0</id>
        <label>BAHD1</label>
    </interactant>
    <organismsDiffer>false</organismsDiffer>
    <experiments>3</experiments>
</comment>
<comment type="interaction">
    <interactant intactId="EBI-3866279">
        <id>Q9BWT7</id>
    </interactant>
    <interactant intactId="EBI-10174813">
        <id>A8KA13</id>
        <label>BCL6B</label>
    </interactant>
    <organismsDiffer>false</organismsDiffer>
    <experiments>3</experiments>
</comment>
<comment type="interaction">
    <interactant intactId="EBI-3866279">
        <id>Q9BWT7</id>
    </interactant>
    <interactant intactId="EBI-751596">
        <id>Q96LL4</id>
        <label>C8orf48</label>
    </interactant>
    <organismsDiffer>false</organismsDiffer>
    <experiments>3</experiments>
</comment>
<comment type="interaction">
    <interactant intactId="EBI-3866279">
        <id>Q9BWT7</id>
    </interactant>
    <interactant intactId="EBI-11530605">
        <id>Q9H257-2</id>
        <label>CARD9</label>
    </interactant>
    <organismsDiffer>false</organismsDiffer>
    <experiments>3</experiments>
</comment>
<comment type="interaction">
    <interactant intactId="EBI-3866279">
        <id>Q9BWT7</id>
    </interactant>
    <interactant intactId="EBI-744545">
        <id>Q8NEC5</id>
        <label>CATSPER1</label>
    </interactant>
    <organismsDiffer>false</organismsDiffer>
    <experiments>3</experiments>
</comment>
<comment type="interaction">
    <interactant intactId="EBI-3866279">
        <id>Q9BWT7</id>
    </interactant>
    <interactant intactId="EBI-712912">
        <id>Q9HC52</id>
        <label>CBX8</label>
    </interactant>
    <organismsDiffer>false</organismsDiffer>
    <experiments>3</experiments>
</comment>
<comment type="interaction">
    <interactant intactId="EBI-3866279">
        <id>Q9BWT7</id>
    </interactant>
    <interactant intactId="EBI-744311">
        <id>Q8IYX3</id>
        <label>CCDC116</label>
    </interactant>
    <organismsDiffer>false</organismsDiffer>
    <experiments>3</experiments>
</comment>
<comment type="interaction">
    <interactant intactId="EBI-3866279">
        <id>Q9BWT7</id>
    </interactant>
    <interactant intactId="EBI-295634">
        <id>Q16543</id>
        <label>CDC37</label>
    </interactant>
    <organismsDiffer>false</organismsDiffer>
    <experiments>3</experiments>
</comment>
<comment type="interaction">
    <interactant intactId="EBI-3866279">
        <id>Q9BWT7</id>
    </interactant>
    <interactant intactId="EBI-372775">
        <id>Q96GE4</id>
        <label>CEP95</label>
    </interactant>
    <organismsDiffer>false</organismsDiffer>
    <experiments>3</experiments>
</comment>
<comment type="interaction">
    <interactant intactId="EBI-3866279">
        <id>Q9BWT7</id>
    </interactant>
    <interactant intactId="EBI-741528">
        <id>Q9UKJ5</id>
        <label>CHIC2</label>
    </interactant>
    <organismsDiffer>false</organismsDiffer>
    <experiments>3</experiments>
</comment>
<comment type="interaction">
    <interactant intactId="EBI-3866279">
        <id>Q9BWT7</id>
    </interactant>
    <interactant intactId="EBI-741032">
        <id>Q8NE01</id>
        <label>CNNM3</label>
    </interactant>
    <organismsDiffer>false</organismsDiffer>
    <experiments>3</experiments>
</comment>
<comment type="interaction">
    <interactant intactId="EBI-3866279">
        <id>Q9BWT7</id>
    </interactant>
    <interactant intactId="EBI-5453285">
        <id>Q2TBE0</id>
        <label>CWF19L2</label>
    </interactant>
    <organismsDiffer>false</organismsDiffer>
    <experiments>3</experiments>
</comment>
<comment type="interaction">
    <interactant intactId="EBI-3866279">
        <id>Q9BWT7</id>
    </interactant>
    <interactant intactId="EBI-3867333">
        <id>A8MQ03</id>
        <label>CYSRT1</label>
    </interactant>
    <organismsDiffer>false</organismsDiffer>
    <experiments>3</experiments>
</comment>
<comment type="interaction">
    <interactant intactId="EBI-3866279">
        <id>Q9BWT7</id>
    </interactant>
    <interactant intactId="EBI-1051531">
        <id>Q6P158</id>
        <label>DHX57</label>
    </interactant>
    <organismsDiffer>false</organismsDiffer>
    <experiments>3</experiments>
</comment>
<comment type="interaction">
    <interactant intactId="EBI-3866279">
        <id>Q9BWT7</id>
    </interactant>
    <interactant intactId="EBI-448771">
        <id>Q92608</id>
        <label>DOCK2</label>
    </interactant>
    <organismsDiffer>false</organismsDiffer>
    <experiments>3</experiments>
</comment>
<comment type="interaction">
    <interactant intactId="EBI-3866279">
        <id>Q9BWT7</id>
    </interactant>
    <interactant intactId="EBI-2924519">
        <id>Q9BV47</id>
        <label>DUSP26</label>
    </interactant>
    <organismsDiffer>false</organismsDiffer>
    <experiments>3</experiments>
</comment>
<comment type="interaction">
    <interactant intactId="EBI-3866279">
        <id>Q9BWT7</id>
    </interactant>
    <interactant intactId="EBI-9247344">
        <id>Q8NA70</id>
        <label>FAM47B</label>
    </interactant>
    <organismsDiffer>false</organismsDiffer>
    <experiments>3</experiments>
</comment>
<comment type="interaction">
    <interactant intactId="EBI-3866279">
        <id>Q9BWT7</id>
    </interactant>
    <interactant intactId="EBI-11961494">
        <id>Q6VB84</id>
        <label>FOXD4L3</label>
    </interactant>
    <organismsDiffer>false</organismsDiffer>
    <experiments>3</experiments>
</comment>
<comment type="interaction">
    <interactant intactId="EBI-3866279">
        <id>Q9BWT7</id>
    </interactant>
    <interactant intactId="EBI-372506">
        <id>Q8TAE8</id>
        <label>GADD45GIP1</label>
    </interactant>
    <organismsDiffer>false</organismsDiffer>
    <experiments>3</experiments>
</comment>
<comment type="interaction">
    <interactant intactId="EBI-3866279">
        <id>Q9BWT7</id>
    </interactant>
    <interactant intactId="EBI-1052570">
        <id>O95995</id>
        <label>GAS8</label>
    </interactant>
    <organismsDiffer>false</organismsDiffer>
    <experiments>3</experiments>
</comment>
<comment type="interaction">
    <interactant intactId="EBI-3866279">
        <id>Q9BWT7</id>
    </interactant>
    <interactant intactId="EBI-744302">
        <id>P14136</id>
        <label>GFAP</label>
    </interactant>
    <organismsDiffer>false</organismsDiffer>
    <experiments>3</experiments>
</comment>
<comment type="interaction">
    <interactant intactId="EBI-3866279">
        <id>Q9BWT7</id>
    </interactant>
    <interactant intactId="EBI-11959863">
        <id>Q9NWQ4-1</id>
        <label>GPATCH2L</label>
    </interactant>
    <organismsDiffer>false</organismsDiffer>
    <experiments>3</experiments>
</comment>
<comment type="interaction">
    <interactant intactId="EBI-3866279">
        <id>Q9BWT7</id>
    </interactant>
    <interactant intactId="EBI-372619">
        <id>Q14687</id>
        <label>GSE1</label>
    </interactant>
    <organismsDiffer>false</organismsDiffer>
    <experiments>3</experiments>
</comment>
<comment type="interaction">
    <interactant intactId="EBI-3866279">
        <id>Q9BWT7</id>
    </interactant>
    <interactant intactId="EBI-353467">
        <id>P09211</id>
        <label>GSTP1</label>
    </interactant>
    <organismsDiffer>false</organismsDiffer>
    <experiments>3</experiments>
</comment>
<comment type="interaction">
    <interactant intactId="EBI-3866279">
        <id>Q9BWT7</id>
    </interactant>
    <interactant intactId="EBI-719843">
        <id>P02008</id>
        <label>HBZ</label>
    </interactant>
    <organismsDiffer>false</organismsDiffer>
    <experiments>3</experiments>
</comment>
<comment type="interaction">
    <interactant intactId="EBI-3866279">
        <id>Q9BWT7</id>
    </interactant>
    <interactant intactId="EBI-745290">
        <id>P17482</id>
        <label>HOXB9</label>
    </interactant>
    <organismsDiffer>false</organismsDiffer>
    <experiments>3</experiments>
</comment>
<comment type="interaction">
    <interactant intactId="EBI-3866279">
        <id>Q9BWT7</id>
    </interactant>
    <interactant intactId="EBI-17178971">
        <id>Q14005-2</id>
        <label>IL16</label>
    </interactant>
    <organismsDiffer>false</organismsDiffer>
    <experiments>3</experiments>
</comment>
<comment type="interaction">
    <interactant intactId="EBI-3866279">
        <id>Q9BWT7</id>
    </interactant>
    <interactant intactId="EBI-2510602">
        <id>Q15040</id>
        <label>JOSD1</label>
    </interactant>
    <organismsDiffer>false</organismsDiffer>
    <experiments>3</experiments>
</comment>
<comment type="interaction">
    <interactant intactId="EBI-3866279">
        <id>Q9BWT7</id>
    </interactant>
    <interactant intactId="EBI-2556193">
        <id>Q63ZY3</id>
        <label>KANK2</label>
    </interactant>
    <organismsDiffer>false</organismsDiffer>
    <experiments>3</experiments>
</comment>
<comment type="interaction">
    <interactant intactId="EBI-3866279">
        <id>Q9BWT7</id>
    </interactant>
    <interactant intactId="EBI-710124">
        <id>O60341</id>
        <label>KDM1A</label>
    </interactant>
    <organismsDiffer>false</organismsDiffer>
    <experiments>3</experiments>
</comment>
<comment type="interaction">
    <interactant intactId="EBI-3866279">
        <id>Q9BWT7</id>
    </interactant>
    <interactant intactId="EBI-751001">
        <id>Q14145</id>
        <label>KEAP1</label>
    </interactant>
    <organismsDiffer>false</organismsDiffer>
    <experiments>3</experiments>
</comment>
<comment type="interaction">
    <interactant intactId="EBI-3866279">
        <id>Q9BWT7</id>
    </interactant>
    <interactant intactId="EBI-2949715">
        <id>O95678</id>
        <label>KRT75</label>
    </interactant>
    <organismsDiffer>false</organismsDiffer>
    <experiments>3</experiments>
</comment>
<comment type="interaction">
    <interactant intactId="EBI-3866279">
        <id>Q9BWT7</id>
    </interactant>
    <interactant intactId="EBI-10171774">
        <id>P60410</id>
        <label>KRTAP10-8</label>
    </interactant>
    <organismsDiffer>false</organismsDiffer>
    <experiments>3</experiments>
</comment>
<comment type="interaction">
    <interactant intactId="EBI-3866279">
        <id>Q9BWT7</id>
    </interactant>
    <interactant intactId="EBI-11953334">
        <id>P60328</id>
        <label>KRTAP12-3</label>
    </interactant>
    <organismsDiffer>false</organismsDiffer>
    <experiments>3</experiments>
</comment>
<comment type="interaction">
    <interactant intactId="EBI-3866279">
        <id>Q9BWT7</id>
    </interactant>
    <interactant intactId="EBI-3957672">
        <id>Q6PEX3</id>
        <label>KRTAP26-1</label>
    </interactant>
    <organismsDiffer>false</organismsDiffer>
    <experiments>3</experiments>
</comment>
<comment type="interaction">
    <interactant intactId="EBI-3866279">
        <id>Q9BWT7</id>
    </interactant>
    <interactant intactId="EBI-1044640">
        <id>Q9BYQ4</id>
        <label>KRTAP9-2</label>
    </interactant>
    <organismsDiffer>false</organismsDiffer>
    <experiments>3</experiments>
</comment>
<comment type="interaction">
    <interactant intactId="EBI-3866279">
        <id>Q9BWT7</id>
    </interactant>
    <interactant intactId="EBI-1043191">
        <id>Q9BYQ3</id>
        <label>KRTAP9-3</label>
    </interactant>
    <organismsDiffer>false</organismsDiffer>
    <experiments>3</experiments>
</comment>
<comment type="interaction">
    <interactant intactId="EBI-3866279">
        <id>Q9BWT7</id>
    </interactant>
    <interactant intactId="EBI-726510">
        <id>Q96BZ8</id>
        <label>LENG1</label>
    </interactant>
    <organismsDiffer>false</organismsDiffer>
    <experiments>3</experiments>
</comment>
<comment type="interaction">
    <interactant intactId="EBI-3866279">
        <id>Q9BWT7</id>
    </interactant>
    <interactant intactId="EBI-746778">
        <id>Q96A72</id>
        <label>MAGOHB</label>
    </interactant>
    <organismsDiffer>false</organismsDiffer>
    <experiments>3</experiments>
</comment>
<comment type="interaction">
    <interactant intactId="EBI-3866279">
        <id>Q9BWT7</id>
    </interactant>
    <interactant intactId="EBI-11098807">
        <id>Q9H7H0-2</id>
        <label>METTL17</label>
    </interactant>
    <organismsDiffer>false</organismsDiffer>
    <experiments>3</experiments>
</comment>
<comment type="interaction">
    <interactant intactId="EBI-3866279">
        <id>Q9BWT7</id>
    </interactant>
    <interactant intactId="EBI-14086479">
        <id>Q8IVT4</id>
        <label>MGC50722</label>
    </interactant>
    <organismsDiffer>false</organismsDiffer>
    <experiments>3</experiments>
</comment>
<comment type="interaction">
    <interactant intactId="EBI-3866279">
        <id>Q9BWT7</id>
    </interactant>
    <interactant intactId="EBI-2691489">
        <id>Q8WV92</id>
        <label>MITD1</label>
    </interactant>
    <organismsDiffer>false</organismsDiffer>
    <experiments>3</experiments>
</comment>
<comment type="interaction">
    <interactant intactId="EBI-3866279">
        <id>Q9BWT7</id>
    </interactant>
    <interactant intactId="EBI-2858213">
        <id>Q86VE0</id>
        <label>MYPOP</label>
    </interactant>
    <organismsDiffer>false</organismsDiffer>
    <experiments>3</experiments>
</comment>
<comment type="interaction">
    <interactant intactId="EBI-3866279">
        <id>Q9BWT7</id>
    </interactant>
    <interactant intactId="EBI-744782">
        <id>Q9Y5B8</id>
        <label>NME7</label>
    </interactant>
    <organismsDiffer>false</organismsDiffer>
    <experiments>3</experiments>
</comment>
<comment type="interaction">
    <interactant intactId="EBI-3866279">
        <id>Q9BWT7</id>
    </interactant>
    <interactant intactId="EBI-10225049">
        <id>Q7RTU3</id>
        <label>OLIG3</label>
    </interactant>
    <organismsDiffer>false</organismsDiffer>
    <experiments>3</experiments>
</comment>
<comment type="interaction">
    <interactant intactId="EBI-3866279">
        <id>Q9BWT7</id>
    </interactant>
    <interactant intactId="EBI-14066006">
        <id>Q4G0R1</id>
        <label>PIBF1</label>
    </interactant>
    <organismsDiffer>false</organismsDiffer>
    <experiments>3</experiments>
</comment>
<comment type="interaction">
    <interactant intactId="EBI-3866279">
        <id>Q9BWT7</id>
    </interactant>
    <interactant intactId="EBI-9087684">
        <id>Q13835-2</id>
        <label>PKP1</label>
    </interactant>
    <organismsDiffer>false</organismsDiffer>
    <experiments>3</experiments>
</comment>
<comment type="interaction">
    <interactant intactId="EBI-3866279">
        <id>Q9BWT7</id>
    </interactant>
    <interactant intactId="EBI-1045072">
        <id>Q96T60</id>
        <label>PNKP</label>
    </interactant>
    <organismsDiffer>false</organismsDiffer>
    <experiments>3</experiments>
</comment>
<comment type="interaction">
    <interactant intactId="EBI-3866279">
        <id>Q9BWT7</id>
    </interactant>
    <interactant intactId="EBI-3957793">
        <id>Q9GZV8</id>
        <label>PRDM14</label>
    </interactant>
    <organismsDiffer>false</organismsDiffer>
    <experiments>3</experiments>
</comment>
<comment type="interaction">
    <interactant intactId="EBI-3866279">
        <id>Q9BWT7</id>
    </interactant>
    <interactant intactId="EBI-2798416">
        <id>Q99633</id>
        <label>PRPF18</label>
    </interactant>
    <organismsDiffer>false</organismsDiffer>
    <experiments>3</experiments>
</comment>
<comment type="interaction">
    <interactant intactId="EBI-3866279">
        <id>Q9BWT7</id>
    </interactant>
    <interactant intactId="EBI-744322">
        <id>O43395</id>
        <label>PRPF3</label>
    </interactant>
    <organismsDiffer>false</organismsDiffer>
    <experiments>3</experiments>
</comment>
<comment type="interaction">
    <interactant intactId="EBI-3866279">
        <id>Q9BWT7</id>
    </interactant>
    <interactant intactId="EBI-11986293">
        <id>P0CG20</id>
        <label>PRR35</label>
    </interactant>
    <organismsDiffer>false</organismsDiffer>
    <experiments>3</experiments>
</comment>
<comment type="interaction">
    <interactant intactId="EBI-3866279">
        <id>Q9BWT7</id>
    </interactant>
    <interactant intactId="EBI-2560233">
        <id>O75127</id>
        <label>PTCD1</label>
    </interactant>
    <organismsDiffer>false</organismsDiffer>
    <experiments>3</experiments>
</comment>
<comment type="interaction">
    <interactant intactId="EBI-3866279">
        <id>Q9BWT7</id>
    </interactant>
    <interactant intactId="EBI-948821">
        <id>P41222</id>
        <label>PTGDS</label>
    </interactant>
    <organismsDiffer>false</organismsDiffer>
    <experiments>3</experiments>
</comment>
<comment type="interaction">
    <interactant intactId="EBI-3866279">
        <id>Q9BWT7</id>
    </interactant>
    <interactant intactId="EBI-366017">
        <id>Q13671</id>
        <label>RIN1</label>
    </interactant>
    <organismsDiffer>false</organismsDiffer>
    <experiments>3</experiments>
</comment>
<comment type="interaction">
    <interactant intactId="EBI-3866279">
        <id>Q9BWT7</id>
    </interactant>
    <interactant intactId="EBI-748391">
        <id>Q9BWG6</id>
        <label>SCNM1</label>
    </interactant>
    <organismsDiffer>false</organismsDiffer>
    <experiments>3</experiments>
</comment>
<comment type="interaction">
    <interactant intactId="EBI-3866279">
        <id>Q9BWT7</id>
    </interactant>
    <interactant intactId="EBI-11017428">
        <id>Q13214-2</id>
        <label>SEMA3B</label>
    </interactant>
    <organismsDiffer>false</organismsDiffer>
    <experiments>3</experiments>
</comment>
<comment type="interaction">
    <interactant intactId="EBI-3866279">
        <id>Q9BWT7</id>
    </interactant>
    <interactant intactId="EBI-11334239">
        <id>Q8TC71</id>
        <label>SPATA18</label>
    </interactant>
    <organismsDiffer>false</organismsDiffer>
    <experiments>3</experiments>
</comment>
<comment type="interaction">
    <interactant intactId="EBI-3866279">
        <id>Q9BWT7</id>
    </interactant>
    <interactant intactId="EBI-12020542">
        <id>Q96LM5</id>
        <label>SPMIP2</label>
    </interactant>
    <organismsDiffer>false</organismsDiffer>
    <experiments>3</experiments>
</comment>
<comment type="interaction">
    <interactant intactId="EBI-3866279">
        <id>Q9BWT7</id>
    </interactant>
    <interactant intactId="EBI-8787464">
        <id>Q9NU19</id>
        <label>TBC1D22B</label>
    </interactant>
    <organismsDiffer>false</organismsDiffer>
    <experiments>3</experiments>
</comment>
<comment type="interaction">
    <interactant intactId="EBI-3866279">
        <id>Q9BWT7</id>
    </interactant>
    <interactant intactId="EBI-11952651">
        <id>Q7Z6R9</id>
        <label>TFAP2D</label>
    </interactant>
    <organismsDiffer>false</organismsDiffer>
    <experiments>3</experiments>
</comment>
<comment type="interaction">
    <interactant intactId="EBI-3866279">
        <id>Q9BWT7</id>
    </interactant>
    <interactant intactId="EBI-719493">
        <id>P14373</id>
        <label>TRIM27</label>
    </interactant>
    <organismsDiffer>false</organismsDiffer>
    <experiments>3</experiments>
</comment>
<comment type="interaction">
    <interactant intactId="EBI-3866279">
        <id>Q9BWT7</id>
    </interactant>
    <interactant intactId="EBI-725997">
        <id>Q8WV44</id>
        <label>TRIM41</label>
    </interactant>
    <organismsDiffer>false</organismsDiffer>
    <experiments>3</experiments>
</comment>
<comment type="interaction">
    <interactant intactId="EBI-3866279">
        <id>Q9BWT7</id>
    </interactant>
    <interactant intactId="EBI-11975223">
        <id>Q70EL1-9</id>
        <label>USP54</label>
    </interactant>
    <organismsDiffer>false</organismsDiffer>
    <experiments>3</experiments>
</comment>
<comment type="interaction">
    <interactant intactId="EBI-3866279">
        <id>Q9BWT7</id>
    </interactant>
    <interactant intactId="EBI-11737646">
        <id>Q5TAP6</id>
        <label>UTP14C</label>
    </interactant>
    <organismsDiffer>false</organismsDiffer>
    <experiments>3</experiments>
</comment>
<comment type="interaction">
    <interactant intactId="EBI-3866279">
        <id>Q9BWT7</id>
    </interactant>
    <interactant intactId="EBI-3918996">
        <id>Q9HCK0</id>
        <label>ZBTB26</label>
    </interactant>
    <organismsDiffer>false</organismsDiffer>
    <experiments>3</experiments>
</comment>
<comment type="interaction">
    <interactant intactId="EBI-3866279">
        <id>Q9BWT7</id>
    </interactant>
    <interactant intactId="EBI-2555749">
        <id>Q6P2D0</id>
        <label>ZFP1</label>
    </interactant>
    <organismsDiffer>false</organismsDiffer>
    <experiments>3</experiments>
</comment>
<comment type="interaction">
    <interactant intactId="EBI-3866279">
        <id>Q9BWT7</id>
    </interactant>
    <interactant intactId="EBI-1105324">
        <id>P21506</id>
        <label>ZNF10</label>
    </interactant>
    <organismsDiffer>false</organismsDiffer>
    <experiments>3</experiments>
</comment>
<comment type="interaction">
    <interactant intactId="EBI-3866279">
        <id>Q9BWT7</id>
    </interactant>
    <interactant intactId="EBI-11278550">
        <id>P17014</id>
        <label>ZNF12</label>
    </interactant>
    <organismsDiffer>false</organismsDiffer>
    <experiments>3</experiments>
</comment>
<comment type="interaction">
    <interactant intactId="EBI-3866279">
        <id>Q9BWT7</id>
    </interactant>
    <interactant intactId="EBI-741694">
        <id>P49910</id>
        <label>ZNF165</label>
    </interactant>
    <organismsDiffer>false</organismsDiffer>
    <experiments>3</experiments>
</comment>
<comment type="interaction">
    <interactant intactId="EBI-3866279">
        <id>Q9BWT7</id>
    </interactant>
    <interactant intactId="EBI-12055755">
        <id>Q9UJW8-4</id>
        <label>ZNF180</label>
    </interactant>
    <organismsDiffer>false</organismsDiffer>
    <experiments>3</experiments>
</comment>
<comment type="interaction">
    <interactant intactId="EBI-3866279">
        <id>Q9BWT7</id>
    </interactant>
    <interactant intactId="EBI-751960">
        <id>O95125</id>
        <label>ZNF202</label>
    </interactant>
    <organismsDiffer>false</organismsDiffer>
    <experiments>3</experiments>
</comment>
<comment type="interaction">
    <interactant intactId="EBI-3866279">
        <id>Q9BWT7</id>
    </interactant>
    <interactant intactId="EBI-10322867">
        <id>Q9UK11</id>
        <label>ZNF223</label>
    </interactant>
    <organismsDiffer>false</organismsDiffer>
    <experiments>3</experiments>
</comment>
<comment type="interaction">
    <interactant intactId="EBI-3866279">
        <id>Q9BWT7</id>
    </interactant>
    <interactant intactId="EBI-8787052">
        <id>Q16600</id>
        <label>ZNF239</label>
    </interactant>
    <organismsDiffer>false</organismsDiffer>
    <experiments>3</experiments>
</comment>
<comment type="interaction">
    <interactant intactId="EBI-3866279">
        <id>Q9BWT7</id>
    </interactant>
    <interactant intactId="EBI-10177272">
        <id>P15622-3</id>
        <label>ZNF250</label>
    </interactant>
    <organismsDiffer>false</organismsDiffer>
    <experiments>3</experiments>
</comment>
<comment type="interaction">
    <interactant intactId="EBI-3866279">
        <id>Q9BWT7</id>
    </interactant>
    <interactant intactId="EBI-18064466">
        <id>Q96NJ3</id>
        <label>ZNF285</label>
    </interactant>
    <organismsDiffer>false</organismsDiffer>
    <experiments>3</experiments>
</comment>
<comment type="interaction">
    <interactant intactId="EBI-3866279">
        <id>Q9BWT7</id>
    </interactant>
    <interactant intactId="EBI-10754950">
        <id>Q9HBT8</id>
        <label>ZNF286A</label>
    </interactant>
    <organismsDiffer>false</organismsDiffer>
    <experiments>3</experiments>
</comment>
<comment type="interaction">
    <interactant intactId="EBI-3866279">
        <id>Q9BWT7</id>
    </interactant>
    <interactant intactId="EBI-1965483">
        <id>P17041</id>
        <label>ZNF32</label>
    </interactant>
    <organismsDiffer>false</organismsDiffer>
    <experiments>3</experiments>
</comment>
<comment type="interaction">
    <interactant intactId="EBI-3866279">
        <id>Q9BWT7</id>
    </interactant>
    <interactant intactId="EBI-7233259">
        <id>Q86UD4</id>
        <label>ZNF329</label>
    </interactant>
    <organismsDiffer>false</organismsDiffer>
    <experiments>3</experiments>
</comment>
<comment type="interaction">
    <interactant intactId="EBI-3866279">
        <id>Q9BWT7</id>
    </interactant>
    <interactant intactId="EBI-2813661">
        <id>Q8N895</id>
        <label>ZNF366</label>
    </interactant>
    <organismsDiffer>false</organismsDiffer>
    <experiments>3</experiments>
</comment>
<comment type="interaction">
    <interactant intactId="EBI-3866279">
        <id>Q9BWT7</id>
    </interactant>
    <interactant intactId="EBI-744257">
        <id>Q96IQ9</id>
        <label>ZNF414</label>
    </interactant>
    <organismsDiffer>false</organismsDiffer>
    <experiments>3</experiments>
</comment>
<comment type="interaction">
    <interactant intactId="EBI-3866279">
        <id>Q9BWT7</id>
    </interactant>
    <interactant intactId="EBI-12273744">
        <id>Q09FC8-4</id>
        <label>ZNF415</label>
    </interactant>
    <organismsDiffer>false</organismsDiffer>
    <experiments>3</experiments>
</comment>
<comment type="interaction">
    <interactant intactId="EBI-3866279">
        <id>Q9BWT7</id>
    </interactant>
    <interactant intactId="EBI-747580">
        <id>Q8NDP4</id>
        <label>ZNF439</label>
    </interactant>
    <organismsDiffer>false</organismsDiffer>
    <experiments>3</experiments>
</comment>
<comment type="interaction">
    <interactant intactId="EBI-3866279">
        <id>Q9BWT7</id>
    </interactant>
    <interactant intactId="EBI-726439">
        <id>Q8IYI8</id>
        <label>ZNF440</label>
    </interactant>
    <organismsDiffer>false</organismsDiffer>
    <experiments>3</experiments>
</comment>
<comment type="interaction">
    <interactant intactId="EBI-3866279">
        <id>Q9BWT7</id>
    </interactant>
    <interactant intactId="EBI-10283126">
        <id>Q96C55</id>
        <label>ZNF524</label>
    </interactant>
    <organismsDiffer>false</organismsDiffer>
    <experiments>3</experiments>
</comment>
<comment type="interaction">
    <interactant intactId="EBI-3866279">
        <id>Q9BWT7</id>
    </interactant>
    <interactant intactId="EBI-2555731">
        <id>Q9H707</id>
        <label>ZNF552</label>
    </interactant>
    <organismsDiffer>false</organismsDiffer>
    <experiments>3</experiments>
</comment>
<comment type="interaction">
    <interactant intactId="EBI-3866279">
        <id>Q9BWT7</id>
    </interactant>
    <interactant intactId="EBI-746605">
        <id>Q9BR84</id>
        <label>ZNF559</label>
    </interactant>
    <organismsDiffer>false</organismsDiffer>
    <experiments>3</experiments>
</comment>
<comment type="interaction">
    <interactant intactId="EBI-3866279">
        <id>Q9BWT7</id>
    </interactant>
    <interactant intactId="EBI-10273713">
        <id>Q8TBZ8</id>
        <label>ZNF564</label>
    </interactant>
    <organismsDiffer>false</organismsDiffer>
    <experiments>3</experiments>
</comment>
<comment type="interaction">
    <interactant intactId="EBI-3866279">
        <id>Q9BWT7</id>
    </interactant>
    <interactant intactId="EBI-14069183">
        <id>Q86XF7</id>
        <label>ZNF575</label>
    </interactant>
    <organismsDiffer>false</organismsDiffer>
    <experiments>3</experiments>
</comment>
<comment type="interaction">
    <interactant intactId="EBI-3866279">
        <id>Q9BWT7</id>
    </interactant>
    <interactant intactId="EBI-745520">
        <id>Q9P0T4</id>
        <label>ZNF581</label>
    </interactant>
    <organismsDiffer>false</organismsDiffer>
    <experiments>3</experiments>
</comment>
<comment type="interaction">
    <interactant intactId="EBI-3866279">
        <id>Q9BWT7</id>
    </interactant>
    <interactant intactId="EBI-6427977">
        <id>Q96SQ5</id>
        <label>ZNF587</label>
    </interactant>
    <organismsDiffer>false</organismsDiffer>
    <experiments>3</experiments>
</comment>
<comment type="interaction">
    <interactant intactId="EBI-3866279">
        <id>Q9BWT7</id>
    </interactant>
    <interactant intactId="EBI-12062855">
        <id>Q6PF04</id>
        <label>ZNF613</label>
    </interactant>
    <organismsDiffer>false</organismsDiffer>
    <experiments>3</experiments>
</comment>
<comment type="interaction">
    <interactant intactId="EBI-3866279">
        <id>Q9BWT7</id>
    </interactant>
    <interactant intactId="EBI-745276">
        <id>Q9BS34</id>
        <label>ZNF670</label>
    </interactant>
    <organismsDiffer>false</organismsDiffer>
    <experiments>3</experiments>
</comment>
<comment type="interaction">
    <interactant intactId="EBI-3866279">
        <id>Q9BWT7</id>
    </interactant>
    <interactant intactId="EBI-7149881">
        <id>Q96BV0</id>
        <label>ZNF775</label>
    </interactant>
    <organismsDiffer>false</organismsDiffer>
    <experiments>3</experiments>
</comment>
<comment type="interaction">
    <interactant intactId="EBI-3866279">
        <id>Q9BWT7</id>
    </interactant>
    <interactant intactId="EBI-12013828">
        <id>P51504</id>
        <label>ZNF80</label>
    </interactant>
    <organismsDiffer>false</organismsDiffer>
    <experiments>3</experiments>
</comment>
<comment type="interaction">
    <interactant intactId="EBI-3866279">
        <id>Q9BWT7</id>
    </interactant>
    <interactant intactId="EBI-11962574">
        <id>Q96EG3</id>
        <label>ZNF837</label>
    </interactant>
    <organismsDiffer>false</organismsDiffer>
    <experiments>3</experiments>
</comment>
<comment type="interaction">
    <interactant intactId="EBI-3866279">
        <id>Q9BWT7</id>
    </interactant>
    <interactant intactId="EBI-14650477">
        <id>Q6NSZ9-2</id>
        <label>ZSCAN25</label>
    </interactant>
    <organismsDiffer>false</organismsDiffer>
    <experiments>3</experiments>
</comment>
<comment type="subcellular location">
    <subcellularLocation>
        <location evidence="1">Cytoplasm</location>
    </subcellularLocation>
</comment>
<comment type="alternative products">
    <event type="alternative splicing"/>
    <isoform>
        <id>Q9BWT7-1</id>
        <name>1</name>
        <sequence type="displayed"/>
    </isoform>
    <isoform>
        <id>Q9BWT7-2</id>
        <name>2</name>
        <sequence type="described" ref="VSP_055523 VSP_055524"/>
    </isoform>
</comment>
<comment type="tissue specificity">
    <text>Detected in adult heart, kidney and liver; lower levels in intestine, placenta, muscle and lung. Also found in fetal lung, liver and kidney.</text>
</comment>
<comment type="disease" evidence="9">
    <disease id="DI-06275">
        <name>Immunodeficiency 89 and autoimmunity</name>
        <acronym>IMD89</acronym>
        <description>An autosomal recessive disorder characterized by adult onset of recurrent infections, allergies, microcytic anemia, and Crohn disease.</description>
        <dbReference type="MIM" id="619632"/>
    </disease>
    <text>The disease may be caused by variants affecting the gene represented in this entry.</text>
</comment>
<comment type="caution">
    <text evidence="11">Supposed to contain a SH3, a PDZ and a guanylate kinase-like domain. But none of these 3 domains are detected by PROSITE, Pfam or SMART.</text>
</comment>
<accession>Q9BWT7</accession>
<accession>Q14CQ8</accession>
<accession>Q5TFG6</accession>
<accession>Q8NC81</accession>
<accession>Q9UGR5</accession>
<accession>Q9UGR6</accession>
<accession>Q9Y3H0</accession>
<protein>
    <recommendedName>
        <fullName>Caspase recruitment domain-containing protein 10</fullName>
    </recommendedName>
    <alternativeName>
        <fullName>CARD-containing MAGUK protein 3</fullName>
        <shortName>Carma 3</shortName>
    </alternativeName>
</protein>
<name>CAR10_HUMAN</name>
<keyword id="KW-0025">Alternative splicing</keyword>
<keyword id="KW-0175">Coiled coil</keyword>
<keyword id="KW-0963">Cytoplasm</keyword>
<keyword id="KW-0597">Phosphoprotein</keyword>
<keyword id="KW-1267">Proteomics identification</keyword>
<keyword id="KW-1185">Reference proteome</keyword>
<evidence type="ECO:0000250" key="1"/>
<evidence type="ECO:0000250" key="2">
    <source>
        <dbReference type="UniProtKB" id="P58660"/>
    </source>
</evidence>
<evidence type="ECO:0000255" key="3"/>
<evidence type="ECO:0000255" key="4">
    <source>
        <dbReference type="PROSITE-ProRule" id="PRU00046"/>
    </source>
</evidence>
<evidence type="ECO:0000256" key="5">
    <source>
        <dbReference type="SAM" id="MobiDB-lite"/>
    </source>
</evidence>
<evidence type="ECO:0000269" key="6">
    <source>
    </source>
</evidence>
<evidence type="ECO:0000269" key="7">
    <source>
    </source>
</evidence>
<evidence type="ECO:0000269" key="8">
    <source>
    </source>
</evidence>
<evidence type="ECO:0000269" key="9">
    <source>
    </source>
</evidence>
<evidence type="ECO:0000303" key="10">
    <source>
    </source>
</evidence>
<evidence type="ECO:0000305" key="11"/>
<reference key="1">
    <citation type="journal article" date="2001" name="J. Biol. Chem.">
        <title>CARD10 is a novel caspase recruitment domain/membrane-associated guanylate kinase family member that interacts with Bcl10 and activates NF-kappa B.</title>
        <authorList>
            <person name="Wang L."/>
            <person name="Guo Y."/>
            <person name="Huang W.-J."/>
            <person name="Ke X."/>
            <person name="Poyet J.-L."/>
            <person name="Manji G.A."/>
            <person name="Merriam S."/>
            <person name="Glucksmann M.A."/>
            <person name="DiStefano P.S."/>
            <person name="Alnemri E.S."/>
            <person name="Bertin J."/>
        </authorList>
    </citation>
    <scope>NUCLEOTIDE SEQUENCE [MRNA] (ISOFORM 1)</scope>
    <scope>VARIANT GLN-289</scope>
</reference>
<reference key="2">
    <citation type="journal article" date="2001" name="FEBS Lett.">
        <title>Carma1, a CARD-containing binding partner of Bcl10, induces Bcl10 phosphorylation and NF-kappaB activation.</title>
        <authorList>
            <person name="Gaide O."/>
            <person name="Martinon F."/>
            <person name="Micheau O."/>
            <person name="Bonnet D."/>
            <person name="Thome M."/>
            <person name="Tschopp J."/>
        </authorList>
    </citation>
    <scope>NUCLEOTIDE SEQUENCE [MRNA] (ISOFORM 1)</scope>
    <scope>VARIANT GLN-289</scope>
</reference>
<reference key="3">
    <citation type="journal article" date="2001" name="FEBS Lett.">
        <authorList>
            <person name="Gaide O."/>
            <person name="Martinon F."/>
            <person name="Micheau O."/>
            <person name="Bonnet D."/>
            <person name="Thome M."/>
            <person name="Tschopp J."/>
        </authorList>
    </citation>
    <scope>ERRATUM OF PUBMED:11356195</scope>
</reference>
<reference key="4">
    <citation type="journal article" date="2004" name="Nat. Genet.">
        <title>Complete sequencing and characterization of 21,243 full-length human cDNAs.</title>
        <authorList>
            <person name="Ota T."/>
            <person name="Suzuki Y."/>
            <person name="Nishikawa T."/>
            <person name="Otsuki T."/>
            <person name="Sugiyama T."/>
            <person name="Irie R."/>
            <person name="Wakamatsu A."/>
            <person name="Hayashi K."/>
            <person name="Sato H."/>
            <person name="Nagai K."/>
            <person name="Kimura K."/>
            <person name="Makita H."/>
            <person name="Sekine M."/>
            <person name="Obayashi M."/>
            <person name="Nishi T."/>
            <person name="Shibahara T."/>
            <person name="Tanaka T."/>
            <person name="Ishii S."/>
            <person name="Yamamoto J."/>
            <person name="Saito K."/>
            <person name="Kawai Y."/>
            <person name="Isono Y."/>
            <person name="Nakamura Y."/>
            <person name="Nagahari K."/>
            <person name="Murakami K."/>
            <person name="Yasuda T."/>
            <person name="Iwayanagi T."/>
            <person name="Wagatsuma M."/>
            <person name="Shiratori A."/>
            <person name="Sudo H."/>
            <person name="Hosoiri T."/>
            <person name="Kaku Y."/>
            <person name="Kodaira H."/>
            <person name="Kondo H."/>
            <person name="Sugawara M."/>
            <person name="Takahashi M."/>
            <person name="Kanda K."/>
            <person name="Yokoi T."/>
            <person name="Furuya T."/>
            <person name="Kikkawa E."/>
            <person name="Omura Y."/>
            <person name="Abe K."/>
            <person name="Kamihara K."/>
            <person name="Katsuta N."/>
            <person name="Sato K."/>
            <person name="Tanikawa M."/>
            <person name="Yamazaki M."/>
            <person name="Ninomiya K."/>
            <person name="Ishibashi T."/>
            <person name="Yamashita H."/>
            <person name="Murakawa K."/>
            <person name="Fujimori K."/>
            <person name="Tanai H."/>
            <person name="Kimata M."/>
            <person name="Watanabe M."/>
            <person name="Hiraoka S."/>
            <person name="Chiba Y."/>
            <person name="Ishida S."/>
            <person name="Ono Y."/>
            <person name="Takiguchi S."/>
            <person name="Watanabe S."/>
            <person name="Yosida M."/>
            <person name="Hotuta T."/>
            <person name="Kusano J."/>
            <person name="Kanehori K."/>
            <person name="Takahashi-Fujii A."/>
            <person name="Hara H."/>
            <person name="Tanase T.-O."/>
            <person name="Nomura Y."/>
            <person name="Togiya S."/>
            <person name="Komai F."/>
            <person name="Hara R."/>
            <person name="Takeuchi K."/>
            <person name="Arita M."/>
            <person name="Imose N."/>
            <person name="Musashino K."/>
            <person name="Yuuki H."/>
            <person name="Oshima A."/>
            <person name="Sasaki N."/>
            <person name="Aotsuka S."/>
            <person name="Yoshikawa Y."/>
            <person name="Matsunawa H."/>
            <person name="Ichihara T."/>
            <person name="Shiohata N."/>
            <person name="Sano S."/>
            <person name="Moriya S."/>
            <person name="Momiyama H."/>
            <person name="Satoh N."/>
            <person name="Takami S."/>
            <person name="Terashima Y."/>
            <person name="Suzuki O."/>
            <person name="Nakagawa S."/>
            <person name="Senoh A."/>
            <person name="Mizoguchi H."/>
            <person name="Goto Y."/>
            <person name="Shimizu F."/>
            <person name="Wakebe H."/>
            <person name="Hishigaki H."/>
            <person name="Watanabe T."/>
            <person name="Sugiyama A."/>
            <person name="Takemoto M."/>
            <person name="Kawakami B."/>
            <person name="Yamazaki M."/>
            <person name="Watanabe K."/>
            <person name="Kumagai A."/>
            <person name="Itakura S."/>
            <person name="Fukuzumi Y."/>
            <person name="Fujimori Y."/>
            <person name="Komiyama M."/>
            <person name="Tashiro H."/>
            <person name="Tanigami A."/>
            <person name="Fujiwara T."/>
            <person name="Ono T."/>
            <person name="Yamada K."/>
            <person name="Fujii Y."/>
            <person name="Ozaki K."/>
            <person name="Hirao M."/>
            <person name="Ohmori Y."/>
            <person name="Kawabata A."/>
            <person name="Hikiji T."/>
            <person name="Kobatake N."/>
            <person name="Inagaki H."/>
            <person name="Ikema Y."/>
            <person name="Okamoto S."/>
            <person name="Okitani R."/>
            <person name="Kawakami T."/>
            <person name="Noguchi S."/>
            <person name="Itoh T."/>
            <person name="Shigeta K."/>
            <person name="Senba T."/>
            <person name="Matsumura K."/>
            <person name="Nakajima Y."/>
            <person name="Mizuno T."/>
            <person name="Morinaga M."/>
            <person name="Sasaki M."/>
            <person name="Togashi T."/>
            <person name="Oyama M."/>
            <person name="Hata H."/>
            <person name="Watanabe M."/>
            <person name="Komatsu T."/>
            <person name="Mizushima-Sugano J."/>
            <person name="Satoh T."/>
            <person name="Shirai Y."/>
            <person name="Takahashi Y."/>
            <person name="Nakagawa K."/>
            <person name="Okumura K."/>
            <person name="Nagase T."/>
            <person name="Nomura N."/>
            <person name="Kikuchi H."/>
            <person name="Masuho Y."/>
            <person name="Yamashita R."/>
            <person name="Nakai K."/>
            <person name="Yada T."/>
            <person name="Nakamura Y."/>
            <person name="Ohara O."/>
            <person name="Isogai T."/>
            <person name="Sugano S."/>
        </authorList>
    </citation>
    <scope>NUCLEOTIDE SEQUENCE [LARGE SCALE MRNA] (ISOFORM 2)</scope>
</reference>
<reference key="5">
    <citation type="journal article" date="1999" name="Nature">
        <title>The DNA sequence of human chromosome 22.</title>
        <authorList>
            <person name="Dunham I."/>
            <person name="Hunt A.R."/>
            <person name="Collins J.E."/>
            <person name="Bruskiewich R."/>
            <person name="Beare D.M."/>
            <person name="Clamp M."/>
            <person name="Smink L.J."/>
            <person name="Ainscough R."/>
            <person name="Almeida J.P."/>
            <person name="Babbage A.K."/>
            <person name="Bagguley C."/>
            <person name="Bailey J."/>
            <person name="Barlow K.F."/>
            <person name="Bates K.N."/>
            <person name="Beasley O.P."/>
            <person name="Bird C.P."/>
            <person name="Blakey S.E."/>
            <person name="Bridgeman A.M."/>
            <person name="Buck D."/>
            <person name="Burgess J."/>
            <person name="Burrill W.D."/>
            <person name="Burton J."/>
            <person name="Carder C."/>
            <person name="Carter N.P."/>
            <person name="Chen Y."/>
            <person name="Clark G."/>
            <person name="Clegg S.M."/>
            <person name="Cobley V.E."/>
            <person name="Cole C.G."/>
            <person name="Collier R.E."/>
            <person name="Connor R."/>
            <person name="Conroy D."/>
            <person name="Corby N.R."/>
            <person name="Coville G.J."/>
            <person name="Cox A.V."/>
            <person name="Davis J."/>
            <person name="Dawson E."/>
            <person name="Dhami P.D."/>
            <person name="Dockree C."/>
            <person name="Dodsworth S.J."/>
            <person name="Durbin R.M."/>
            <person name="Ellington A.G."/>
            <person name="Evans K.L."/>
            <person name="Fey J.M."/>
            <person name="Fleming K."/>
            <person name="French L."/>
            <person name="Garner A.A."/>
            <person name="Gilbert J.G.R."/>
            <person name="Goward M.E."/>
            <person name="Grafham D.V."/>
            <person name="Griffiths M.N.D."/>
            <person name="Hall C."/>
            <person name="Hall R.E."/>
            <person name="Hall-Tamlyn G."/>
            <person name="Heathcott R.W."/>
            <person name="Ho S."/>
            <person name="Holmes S."/>
            <person name="Hunt S.E."/>
            <person name="Jones M.C."/>
            <person name="Kershaw J."/>
            <person name="Kimberley A.M."/>
            <person name="King A."/>
            <person name="Laird G.K."/>
            <person name="Langford C.F."/>
            <person name="Leversha M.A."/>
            <person name="Lloyd C."/>
            <person name="Lloyd D.M."/>
            <person name="Martyn I.D."/>
            <person name="Mashreghi-Mohammadi M."/>
            <person name="Matthews L.H."/>
            <person name="Mccann O.T."/>
            <person name="Mcclay J."/>
            <person name="Mclaren S."/>
            <person name="McMurray A.A."/>
            <person name="Milne S.A."/>
            <person name="Mortimore B.J."/>
            <person name="Odell C.N."/>
            <person name="Pavitt R."/>
            <person name="Pearce A.V."/>
            <person name="Pearson D."/>
            <person name="Phillimore B.J.C.T."/>
            <person name="Phillips S.H."/>
            <person name="Plumb R.W."/>
            <person name="Ramsay H."/>
            <person name="Ramsey Y."/>
            <person name="Rogers L."/>
            <person name="Ross M.T."/>
            <person name="Scott C.E."/>
            <person name="Sehra H.K."/>
            <person name="Skuce C.D."/>
            <person name="Smalley S."/>
            <person name="Smith M.L."/>
            <person name="Soderlund C."/>
            <person name="Spragon L."/>
            <person name="Steward C.A."/>
            <person name="Sulston J.E."/>
            <person name="Swann R.M."/>
            <person name="Vaudin M."/>
            <person name="Wall M."/>
            <person name="Wallis J.M."/>
            <person name="Whiteley M.N."/>
            <person name="Willey D.L."/>
            <person name="Williams L."/>
            <person name="Williams S.A."/>
            <person name="Williamson H."/>
            <person name="Wilmer T.E."/>
            <person name="Wilming L."/>
            <person name="Wright C.L."/>
            <person name="Hubbard T."/>
            <person name="Bentley D.R."/>
            <person name="Beck S."/>
            <person name="Rogers J."/>
            <person name="Shimizu N."/>
            <person name="Minoshima S."/>
            <person name="Kawasaki K."/>
            <person name="Sasaki T."/>
            <person name="Asakawa S."/>
            <person name="Kudoh J."/>
            <person name="Shintani A."/>
            <person name="Shibuya K."/>
            <person name="Yoshizaki Y."/>
            <person name="Aoki N."/>
            <person name="Mitsuyama S."/>
            <person name="Roe B.A."/>
            <person name="Chen F."/>
            <person name="Chu L."/>
            <person name="Crabtree J."/>
            <person name="Deschamps S."/>
            <person name="Do A."/>
            <person name="Do T."/>
            <person name="Dorman A."/>
            <person name="Fang F."/>
            <person name="Fu Y."/>
            <person name="Hu P."/>
            <person name="Hua A."/>
            <person name="Kenton S."/>
            <person name="Lai H."/>
            <person name="Lao H.I."/>
            <person name="Lewis J."/>
            <person name="Lewis S."/>
            <person name="Lin S.-P."/>
            <person name="Loh P."/>
            <person name="Malaj E."/>
            <person name="Nguyen T."/>
            <person name="Pan H."/>
            <person name="Phan S."/>
            <person name="Qi S."/>
            <person name="Qian Y."/>
            <person name="Ray L."/>
            <person name="Ren Q."/>
            <person name="Shaull S."/>
            <person name="Sloan D."/>
            <person name="Song L."/>
            <person name="Wang Q."/>
            <person name="Wang Y."/>
            <person name="Wang Z."/>
            <person name="White J."/>
            <person name="Willingham D."/>
            <person name="Wu H."/>
            <person name="Yao Z."/>
            <person name="Zhan M."/>
            <person name="Zhang G."/>
            <person name="Chissoe S."/>
            <person name="Murray J."/>
            <person name="Miller N."/>
            <person name="Minx P."/>
            <person name="Fulton R."/>
            <person name="Johnson D."/>
            <person name="Bemis G."/>
            <person name="Bentley D."/>
            <person name="Bradshaw H."/>
            <person name="Bourne S."/>
            <person name="Cordes M."/>
            <person name="Du Z."/>
            <person name="Fulton L."/>
            <person name="Goela D."/>
            <person name="Graves T."/>
            <person name="Hawkins J."/>
            <person name="Hinds K."/>
            <person name="Kemp K."/>
            <person name="Latreille P."/>
            <person name="Layman D."/>
            <person name="Ozersky P."/>
            <person name="Rohlfing T."/>
            <person name="Scheet P."/>
            <person name="Walker C."/>
            <person name="Wamsley A."/>
            <person name="Wohldmann P."/>
            <person name="Pepin K."/>
            <person name="Nelson J."/>
            <person name="Korf I."/>
            <person name="Bedell J.A."/>
            <person name="Hillier L.W."/>
            <person name="Mardis E."/>
            <person name="Waterston R."/>
            <person name="Wilson R."/>
            <person name="Emanuel B.S."/>
            <person name="Shaikh T."/>
            <person name="Kurahashi H."/>
            <person name="Saitta S."/>
            <person name="Budarf M.L."/>
            <person name="McDermid H.E."/>
            <person name="Johnson A."/>
            <person name="Wong A.C.C."/>
            <person name="Morrow B.E."/>
            <person name="Edelmann L."/>
            <person name="Kim U.J."/>
            <person name="Shizuya H."/>
            <person name="Simon M.I."/>
            <person name="Dumanski J.P."/>
            <person name="Peyrard M."/>
            <person name="Kedra D."/>
            <person name="Seroussi E."/>
            <person name="Fransson I."/>
            <person name="Tapia I."/>
            <person name="Bruder C.E."/>
            <person name="O'Brien K.P."/>
            <person name="Wilkinson P."/>
            <person name="Bodenteich A."/>
            <person name="Hartman K."/>
            <person name="Hu X."/>
            <person name="Khan A.S."/>
            <person name="Lane L."/>
            <person name="Tilahun Y."/>
            <person name="Wright H."/>
        </authorList>
    </citation>
    <scope>NUCLEOTIDE SEQUENCE [LARGE SCALE GENOMIC DNA]</scope>
</reference>
<reference key="6">
    <citation type="journal article" date="2004" name="Genome Res.">
        <title>The status, quality, and expansion of the NIH full-length cDNA project: the Mammalian Gene Collection (MGC).</title>
        <authorList>
            <consortium name="The MGC Project Team"/>
        </authorList>
    </citation>
    <scope>NUCLEOTIDE SEQUENCE [LARGE SCALE MRNA] (ISOFORM 1)</scope>
    <source>
        <tissue>Liver</tissue>
    </source>
</reference>
<reference key="7">
    <citation type="journal article" date="2017" name="Oncogene">
        <title>TMEM43/LUMA is a key signaling component mediating EGFR-induced NF-kappaB activation and tumor progression.</title>
        <authorList>
            <person name="Jiang C."/>
            <person name="Zhu Y."/>
            <person name="Zhou Z."/>
            <person name="Gumin J."/>
            <person name="Bengtsson L."/>
            <person name="Wu W."/>
            <person name="Songyang Z."/>
            <person name="Lang F.F."/>
            <person name="Lin X."/>
        </authorList>
    </citation>
    <scope>FUNCTION</scope>
    <scope>INTERACTION WITH TMEM43</scope>
</reference>
<reference key="8">
    <citation type="journal article" date="2020" name="Cell. Mol. Immunol.">
        <title>Mutant CARD10 in a family with progressive immunodeficiency and autoimmunity.</title>
        <authorList>
            <person name="Yang D.H."/>
            <person name="Guo T."/>
            <person name="Yuan Z.Z."/>
            <person name="Lei C."/>
            <person name="Ding S.Z."/>
            <person name="Yang Y.F."/>
            <person name="Tan Z.P."/>
            <person name="Luo H."/>
        </authorList>
    </citation>
    <scope>VARIANT IMD89 CYS-420</scope>
    <scope>CHARACTERIZATION OF VARIANT IMD89 CYS-420</scope>
    <scope>INVOLVEMENT IN IMD89</scope>
</reference>
<proteinExistence type="evidence at protein level"/>
<feature type="chain" id="PRO_0000144084" description="Caspase recruitment domain-containing protein 10">
    <location>
        <begin position="1"/>
        <end position="1032"/>
    </location>
</feature>
<feature type="domain" description="CARD" evidence="4">
    <location>
        <begin position="23"/>
        <end position="115"/>
    </location>
</feature>
<feature type="region of interest" description="Disordered" evidence="5">
    <location>
        <begin position="1"/>
        <end position="23"/>
    </location>
</feature>
<feature type="region of interest" description="Disordered" evidence="5">
    <location>
        <begin position="253"/>
        <end position="276"/>
    </location>
</feature>
<feature type="region of interest" description="Disordered" evidence="5">
    <location>
        <begin position="481"/>
        <end position="553"/>
    </location>
</feature>
<feature type="coiled-coil region" evidence="3">
    <location>
        <begin position="138"/>
        <end position="456"/>
    </location>
</feature>
<feature type="compositionally biased region" description="Basic and acidic residues" evidence="5">
    <location>
        <begin position="261"/>
        <end position="276"/>
    </location>
</feature>
<feature type="compositionally biased region" description="Basic and acidic residues" evidence="5">
    <location>
        <begin position="504"/>
        <end position="517"/>
    </location>
</feature>
<feature type="modified residue" description="Phosphoserine" evidence="2">
    <location>
        <position position="18"/>
    </location>
</feature>
<feature type="splice variant" id="VSP_055523" description="In isoform 2." evidence="10">
    <original>MPGRAEAGEAEEEAGAG</original>
    <variation>MGVGVGLGNGLRLLPWM</variation>
    <location>
        <begin position="1"/>
        <end position="17"/>
    </location>
</feature>
<feature type="splice variant" id="VSP_055524" description="In isoform 2." evidence="10">
    <location>
        <begin position="18"/>
        <end position="303"/>
    </location>
</feature>
<feature type="sequence variant" id="VAR_028116" description="In dbSNP:rs9610775." evidence="6 7">
    <original>R</original>
    <variation>Q</variation>
    <location>
        <position position="289"/>
    </location>
</feature>
<feature type="sequence variant" id="VAR_086467" description="In IMD89; uncertain significance; decreased protein expression compared to wild type when transfected in HEK293T cells." evidence="9">
    <original>R</original>
    <variation>C</variation>
    <location>
        <position position="420"/>
    </location>
</feature>
<feature type="sequence conflict" description="In Ref. 1; AAK26165 and 2; AAK54454." evidence="11" ref="1 2">
    <original>L</original>
    <variation>R</variation>
    <location>
        <position position="932"/>
    </location>
</feature>
<dbReference type="EMBL" id="AY028896">
    <property type="protein sequence ID" value="AAK26165.1"/>
    <property type="molecule type" value="mRNA"/>
</dbReference>
<dbReference type="EMBL" id="AY032928">
    <property type="protein sequence ID" value="AAK54454.1"/>
    <property type="molecule type" value="mRNA"/>
</dbReference>
<dbReference type="EMBL" id="AK074906">
    <property type="protein sequence ID" value="BAC11282.1"/>
    <property type="molecule type" value="mRNA"/>
</dbReference>
<dbReference type="EMBL" id="AL022315">
    <property type="status" value="NOT_ANNOTATED_CDS"/>
    <property type="molecule type" value="Genomic_DNA"/>
</dbReference>
<dbReference type="EMBL" id="FP325335">
    <property type="status" value="NOT_ANNOTATED_CDS"/>
    <property type="molecule type" value="Genomic_DNA"/>
</dbReference>
<dbReference type="EMBL" id="BC113659">
    <property type="protein sequence ID" value="AAI13660.1"/>
    <property type="molecule type" value="mRNA"/>
</dbReference>
<dbReference type="CCDS" id="CCDS13948.1">
    <molecule id="Q9BWT7-1"/>
</dbReference>
<dbReference type="RefSeq" id="NP_055365.2">
    <molecule id="Q9BWT7-1"/>
    <property type="nucleotide sequence ID" value="NM_014550.4"/>
</dbReference>
<dbReference type="SMR" id="Q9BWT7"/>
<dbReference type="BioGRID" id="118908">
    <property type="interactions" value="135"/>
</dbReference>
<dbReference type="ComplexPortal" id="CPX-8902">
    <property type="entry name" value="CARD-BCL10-MALT1 complex, CARD10 variant"/>
</dbReference>
<dbReference type="FunCoup" id="Q9BWT7">
    <property type="interactions" value="390"/>
</dbReference>
<dbReference type="IntAct" id="Q9BWT7">
    <property type="interactions" value="115"/>
</dbReference>
<dbReference type="MINT" id="Q9BWT7"/>
<dbReference type="STRING" id="9606.ENSP00000384570"/>
<dbReference type="GlyGen" id="Q9BWT7">
    <property type="glycosylation" value="2 sites, 1 O-linked glycan (1 site)"/>
</dbReference>
<dbReference type="iPTMnet" id="Q9BWT7"/>
<dbReference type="PhosphoSitePlus" id="Q9BWT7"/>
<dbReference type="BioMuta" id="CARD10"/>
<dbReference type="DMDM" id="116241281"/>
<dbReference type="jPOST" id="Q9BWT7"/>
<dbReference type="MassIVE" id="Q9BWT7"/>
<dbReference type="PaxDb" id="9606-ENSP00000384570"/>
<dbReference type="PeptideAtlas" id="Q9BWT7"/>
<dbReference type="ProteomicsDB" id="72861"/>
<dbReference type="ProteomicsDB" id="79315">
    <molecule id="Q9BWT7-1"/>
</dbReference>
<dbReference type="Antibodypedia" id="25967">
    <property type="antibodies" value="232 antibodies from 29 providers"/>
</dbReference>
<dbReference type="DNASU" id="29775"/>
<dbReference type="Ensembl" id="ENST00000251973.10">
    <molecule id="Q9BWT7-1"/>
    <property type="protein sequence ID" value="ENSP00000251973.5"/>
    <property type="gene ID" value="ENSG00000100065.15"/>
</dbReference>
<dbReference type="Ensembl" id="ENST00000403299.5">
    <molecule id="Q9BWT7-1"/>
    <property type="protein sequence ID" value="ENSP00000384570.1"/>
    <property type="gene ID" value="ENSG00000100065.15"/>
</dbReference>
<dbReference type="Ensembl" id="ENST00000406271.7">
    <molecule id="Q9BWT7-2"/>
    <property type="protein sequence ID" value="ENSP00000385799.3"/>
    <property type="gene ID" value="ENSG00000100065.15"/>
</dbReference>
<dbReference type="GeneID" id="29775"/>
<dbReference type="KEGG" id="hsa:29775"/>
<dbReference type="MANE-Select" id="ENST00000251973.10">
    <property type="protein sequence ID" value="ENSP00000251973.5"/>
    <property type="RefSeq nucleotide sequence ID" value="NM_014550.4"/>
    <property type="RefSeq protein sequence ID" value="NP_055365.2"/>
</dbReference>
<dbReference type="UCSC" id="uc003asw.2">
    <molecule id="Q9BWT7-1"/>
    <property type="organism name" value="human"/>
</dbReference>
<dbReference type="AGR" id="HGNC:16422"/>
<dbReference type="CTD" id="29775"/>
<dbReference type="DisGeNET" id="29775"/>
<dbReference type="GeneCards" id="CARD10"/>
<dbReference type="HGNC" id="HGNC:16422">
    <property type="gene designation" value="CARD10"/>
</dbReference>
<dbReference type="HPA" id="ENSG00000100065">
    <property type="expression patterns" value="Tissue enhanced (intestine)"/>
</dbReference>
<dbReference type="MalaCards" id="CARD10"/>
<dbReference type="MIM" id="607209">
    <property type="type" value="gene"/>
</dbReference>
<dbReference type="MIM" id="619632">
    <property type="type" value="phenotype"/>
</dbReference>
<dbReference type="neXtProt" id="NX_Q9BWT7"/>
<dbReference type="OpenTargets" id="ENSG00000100065"/>
<dbReference type="PharmGKB" id="PA134927444"/>
<dbReference type="VEuPathDB" id="HostDB:ENSG00000100065"/>
<dbReference type="eggNOG" id="KOG0708">
    <property type="taxonomic scope" value="Eukaryota"/>
</dbReference>
<dbReference type="GeneTree" id="ENSGT00940000157763"/>
<dbReference type="HOGENOM" id="CLU_009760_1_0_1"/>
<dbReference type="InParanoid" id="Q9BWT7"/>
<dbReference type="OMA" id="WWTEPST"/>
<dbReference type="OrthoDB" id="8868836at2759"/>
<dbReference type="PAN-GO" id="Q9BWT7">
    <property type="GO annotations" value="2 GO annotations based on evolutionary models"/>
</dbReference>
<dbReference type="PhylomeDB" id="Q9BWT7"/>
<dbReference type="TreeFam" id="TF351139"/>
<dbReference type="PathwayCommons" id="Q9BWT7"/>
<dbReference type="SignaLink" id="Q9BWT7"/>
<dbReference type="SIGNOR" id="Q9BWT7"/>
<dbReference type="BioGRID-ORCS" id="29775">
    <property type="hits" value="28 hits in 1153 CRISPR screens"/>
</dbReference>
<dbReference type="ChiTaRS" id="CARD10">
    <property type="organism name" value="human"/>
</dbReference>
<dbReference type="GeneWiki" id="CARD10"/>
<dbReference type="GenomeRNAi" id="29775"/>
<dbReference type="Pharos" id="Q9BWT7">
    <property type="development level" value="Tbio"/>
</dbReference>
<dbReference type="PRO" id="PR:Q9BWT7"/>
<dbReference type="Proteomes" id="UP000005640">
    <property type="component" value="Chromosome 22"/>
</dbReference>
<dbReference type="RNAct" id="Q9BWT7">
    <property type="molecule type" value="protein"/>
</dbReference>
<dbReference type="Bgee" id="ENSG00000100065">
    <property type="expression patterns" value="Expressed in parotid gland and 170 other cell types or tissues"/>
</dbReference>
<dbReference type="ExpressionAtlas" id="Q9BWT7">
    <property type="expression patterns" value="baseline and differential"/>
</dbReference>
<dbReference type="GO" id="GO:0032449">
    <property type="term" value="C:CBM complex"/>
    <property type="evidence" value="ECO:0000303"/>
    <property type="project" value="UniProtKB"/>
</dbReference>
<dbReference type="GO" id="GO:0005737">
    <property type="term" value="C:cytoplasm"/>
    <property type="evidence" value="ECO:0000303"/>
    <property type="project" value="UniProtKB"/>
</dbReference>
<dbReference type="GO" id="GO:0001772">
    <property type="term" value="C:immunological synapse"/>
    <property type="evidence" value="ECO:0000318"/>
    <property type="project" value="GO_Central"/>
</dbReference>
<dbReference type="GO" id="GO:0030159">
    <property type="term" value="F:signaling receptor complex adaptor activity"/>
    <property type="evidence" value="ECO:0000303"/>
    <property type="project" value="UniProtKB"/>
</dbReference>
<dbReference type="GO" id="GO:0007250">
    <property type="term" value="P:activation of NF-kappaB-inducing kinase activity"/>
    <property type="evidence" value="ECO:0000314"/>
    <property type="project" value="UniProtKB"/>
</dbReference>
<dbReference type="GO" id="GO:0090051">
    <property type="term" value="P:negative regulation of cell migration involved in sprouting angiogenesis"/>
    <property type="evidence" value="ECO:0000315"/>
    <property type="project" value="BHF-UCL"/>
</dbReference>
<dbReference type="GO" id="GO:0043123">
    <property type="term" value="P:positive regulation of canonical NF-kappaB signal transduction"/>
    <property type="evidence" value="ECO:0000318"/>
    <property type="project" value="GO_Central"/>
</dbReference>
<dbReference type="GO" id="GO:1900182">
    <property type="term" value="P:positive regulation of protein localization to nucleus"/>
    <property type="evidence" value="ECO:0000315"/>
    <property type="project" value="BHF-UCL"/>
</dbReference>
<dbReference type="GO" id="GO:0065003">
    <property type="term" value="P:protein-containing complex assembly"/>
    <property type="evidence" value="ECO:0000303"/>
    <property type="project" value="UniProtKB"/>
</dbReference>
<dbReference type="GO" id="GO:0042981">
    <property type="term" value="P:regulation of apoptotic process"/>
    <property type="evidence" value="ECO:0007669"/>
    <property type="project" value="InterPro"/>
</dbReference>
<dbReference type="GO" id="GO:0050776">
    <property type="term" value="P:regulation of immune response"/>
    <property type="evidence" value="ECO:0000318"/>
    <property type="project" value="GO_Central"/>
</dbReference>
<dbReference type="CDD" id="cd08807">
    <property type="entry name" value="CARD_CARD10_CARMA3"/>
    <property type="match status" value="1"/>
</dbReference>
<dbReference type="FunFam" id="2.30.30.40:FF:000143">
    <property type="entry name" value="Caspase recruitment domain family member 10"/>
    <property type="match status" value="1"/>
</dbReference>
<dbReference type="FunFam" id="3.40.50.300:FF:000867">
    <property type="entry name" value="Caspase recruitment domain family member 10"/>
    <property type="match status" value="1"/>
</dbReference>
<dbReference type="FunFam" id="1.10.533.10:FF:000003">
    <property type="entry name" value="Caspase recruitment domain family, member 11"/>
    <property type="match status" value="1"/>
</dbReference>
<dbReference type="Gene3D" id="1.10.533.10">
    <property type="entry name" value="Death Domain, Fas"/>
    <property type="match status" value="1"/>
</dbReference>
<dbReference type="Gene3D" id="3.40.50.300">
    <property type="entry name" value="P-loop containing nucleotide triphosphate hydrolases"/>
    <property type="match status" value="1"/>
</dbReference>
<dbReference type="Gene3D" id="2.30.30.40">
    <property type="entry name" value="SH3 Domains"/>
    <property type="match status" value="1"/>
</dbReference>
<dbReference type="InterPro" id="IPR001315">
    <property type="entry name" value="CARD"/>
</dbReference>
<dbReference type="InterPro" id="IPR042140">
    <property type="entry name" value="CARD_CARD10"/>
</dbReference>
<dbReference type="InterPro" id="IPR011029">
    <property type="entry name" value="DEATH-like_dom_sf"/>
</dbReference>
<dbReference type="InterPro" id="IPR027417">
    <property type="entry name" value="P-loop_NTPase"/>
</dbReference>
<dbReference type="PANTHER" id="PTHR14559">
    <property type="entry name" value="CASPASE RECRUITMENT DOMAIN FAMILY"/>
    <property type="match status" value="1"/>
</dbReference>
<dbReference type="PANTHER" id="PTHR14559:SF12">
    <property type="entry name" value="CASPASE RECRUITMENT DOMAIN-CONTAINING PROTEIN 10"/>
    <property type="match status" value="1"/>
</dbReference>
<dbReference type="Pfam" id="PF00619">
    <property type="entry name" value="CARD"/>
    <property type="match status" value="1"/>
</dbReference>
<dbReference type="SUPFAM" id="SSF47986">
    <property type="entry name" value="DEATH domain"/>
    <property type="match status" value="1"/>
</dbReference>
<dbReference type="SUPFAM" id="SSF57997">
    <property type="entry name" value="Tropomyosin"/>
    <property type="match status" value="1"/>
</dbReference>
<dbReference type="PROSITE" id="PS50209">
    <property type="entry name" value="CARD"/>
    <property type="match status" value="1"/>
</dbReference>
<organism>
    <name type="scientific">Homo sapiens</name>
    <name type="common">Human</name>
    <dbReference type="NCBI Taxonomy" id="9606"/>
    <lineage>
        <taxon>Eukaryota</taxon>
        <taxon>Metazoa</taxon>
        <taxon>Chordata</taxon>
        <taxon>Craniata</taxon>
        <taxon>Vertebrata</taxon>
        <taxon>Euteleostomi</taxon>
        <taxon>Mammalia</taxon>
        <taxon>Eutheria</taxon>
        <taxon>Euarchontoglires</taxon>
        <taxon>Primates</taxon>
        <taxon>Haplorrhini</taxon>
        <taxon>Catarrhini</taxon>
        <taxon>Hominidae</taxon>
        <taxon>Homo</taxon>
    </lineage>
</organism>
<gene>
    <name type="primary">CARD10</name>
    <name type="synonym">CARMA3</name>
</gene>
<sequence>MPGRAEAGEAEEEAGAGSGSEAEEDALWERIEGVRHRLARALNPAKLTPYLRQCRVIDEQDEEEVLSTYRFPCRVNRTGRLMDILRCRGKRGYEAFLEALEFYYPEHFTLLTGQEPAQRCSMILDEEGPEGLTQFLMTEVRRLREARKSQLQREQQLQARGRVLEEERAGLEQRLRDQQQAQERCQRLREDWEAGSLELLRLKDENYMIAMRLAQLSEEKNSAVLRSRDLQLAVDQLKLKVSRLEEECALLRRARGPPPGAEEKEKEKEKEKEPDNVDLVSELRAENQRLTASLRELQEGLQQEASRPGAPGSERILLDILEHDWREAQDSRQELCQKLHAVQGELQWAEELRDQYLQEMEDLRLKHRTLQKDCDLYKHRMATVLAQLEEIEKERDQAIQSRDRIQLQYSQSLIEKDQYRKQVRGLEAERDELLTTLTSLEGTKALLEVQLQRAQGGTCLKACASSHSLCSNLSSTWSLSEFPSPLGGPEATGEAAVMGGPEPHNSEEATDSEKEINRLSILPFPPSAGSILRRQREEDPAPPKRSFSSMSDITGSVTLKPWSPGLSSSSSSDSVWPLGKPEGLLARGCGLDFLNRSLAIRVSGRSPPGGPEPQDKGPDGLSFYGDRWSGAVVRRVLSGPGSARMEPREQRVEAAGLEGACLEAEAQQRTLLWNQGSTLPSLMDSKACQSFHEALEAWAKGPGAEPFYIRANLTLPERADPHALCVKAQEILRLVDSAYKRRQEWFCTRVDPLTLRDLDRGTVPNYQRAQQLLEVQEKCLPSSRHRGPRSNLKKRALDQLRLVRPKPVGAPAGDSPDQLLLEPCAEPERSLRPYSLVRPLLVSALRPVVLLPECLAPRLIRNLLDLPSSRLDFQVCPAESLSGEELCPSSAPGAPKAQPATPGLGSRIRAIQESVGKKHCLLELGARGVRELVQNEIYPIVIHVEVTEKNVREVRGLLGRPGWRDSELLRQCRGSEQVLWGLPCSWVQVPAHEWGHAEELAKVVRGRILQEQARLVWVECGSSRGCPSSSEA</sequence>